<reference key="1">
    <citation type="journal article" date="2005" name="Genome Res.">
        <title>Sequence, annotation, and analysis of synteny between rice chromosome 3 and diverged grass species.</title>
        <authorList>
            <consortium name="The rice chromosome 3 sequencing consortium"/>
            <person name="Buell C.R."/>
            <person name="Yuan Q."/>
            <person name="Ouyang S."/>
            <person name="Liu J."/>
            <person name="Zhu W."/>
            <person name="Wang A."/>
            <person name="Maiti R."/>
            <person name="Haas B."/>
            <person name="Wortman J."/>
            <person name="Pertea M."/>
            <person name="Jones K.M."/>
            <person name="Kim M."/>
            <person name="Overton L."/>
            <person name="Tsitrin T."/>
            <person name="Fadrosh D."/>
            <person name="Bera J."/>
            <person name="Weaver B."/>
            <person name="Jin S."/>
            <person name="Johri S."/>
            <person name="Reardon M."/>
            <person name="Webb K."/>
            <person name="Hill J."/>
            <person name="Moffat K."/>
            <person name="Tallon L."/>
            <person name="Van Aken S."/>
            <person name="Lewis M."/>
            <person name="Utterback T."/>
            <person name="Feldblyum T."/>
            <person name="Zismann V."/>
            <person name="Iobst S."/>
            <person name="Hsiao J."/>
            <person name="de Vazeille A.R."/>
            <person name="Salzberg S.L."/>
            <person name="White O."/>
            <person name="Fraser C.M."/>
            <person name="Yu Y."/>
            <person name="Kim H."/>
            <person name="Rambo T."/>
            <person name="Currie J."/>
            <person name="Collura K."/>
            <person name="Kernodle-Thompson S."/>
            <person name="Wei F."/>
            <person name="Kudrna K."/>
            <person name="Ammiraju J.S.S."/>
            <person name="Luo M."/>
            <person name="Goicoechea J.L."/>
            <person name="Wing R.A."/>
            <person name="Henry D."/>
            <person name="Oates R."/>
            <person name="Palmer M."/>
            <person name="Pries G."/>
            <person name="Saski C."/>
            <person name="Simmons J."/>
            <person name="Soderlund C."/>
            <person name="Nelson W."/>
            <person name="de la Bastide M."/>
            <person name="Spiegel L."/>
            <person name="Nascimento L."/>
            <person name="Huang E."/>
            <person name="Preston R."/>
            <person name="Zutavern T."/>
            <person name="Palmer L."/>
            <person name="O'Shaughnessy A."/>
            <person name="Dike S."/>
            <person name="McCombie W.R."/>
            <person name="Minx P."/>
            <person name="Cordum H."/>
            <person name="Wilson R."/>
            <person name="Jin W."/>
            <person name="Lee H.R."/>
            <person name="Jiang J."/>
            <person name="Jackson S."/>
        </authorList>
    </citation>
    <scope>NUCLEOTIDE SEQUENCE [LARGE SCALE GENOMIC DNA]</scope>
    <source>
        <strain>cv. Nipponbare</strain>
    </source>
</reference>
<reference key="2">
    <citation type="journal article" date="2005" name="Nature">
        <title>The map-based sequence of the rice genome.</title>
        <authorList>
            <consortium name="International rice genome sequencing project (IRGSP)"/>
        </authorList>
    </citation>
    <scope>NUCLEOTIDE SEQUENCE [LARGE SCALE GENOMIC DNA]</scope>
    <source>
        <strain>cv. Nipponbare</strain>
    </source>
</reference>
<reference key="3">
    <citation type="journal article" date="2008" name="Nucleic Acids Res.">
        <title>The rice annotation project database (RAP-DB): 2008 update.</title>
        <authorList>
            <consortium name="The rice annotation project (RAP)"/>
        </authorList>
    </citation>
    <scope>GENOME REANNOTATION</scope>
    <source>
        <strain>cv. Nipponbare</strain>
    </source>
</reference>
<reference key="4">
    <citation type="journal article" date="2013" name="Rice">
        <title>Improvement of the Oryza sativa Nipponbare reference genome using next generation sequence and optical map data.</title>
        <authorList>
            <person name="Kawahara Y."/>
            <person name="de la Bastide M."/>
            <person name="Hamilton J.P."/>
            <person name="Kanamori H."/>
            <person name="McCombie W.R."/>
            <person name="Ouyang S."/>
            <person name="Schwartz D.C."/>
            <person name="Tanaka T."/>
            <person name="Wu J."/>
            <person name="Zhou S."/>
            <person name="Childs K.L."/>
            <person name="Davidson R.M."/>
            <person name="Lin H."/>
            <person name="Quesada-Ocampo L."/>
            <person name="Vaillancourt B."/>
            <person name="Sakai H."/>
            <person name="Lee S.S."/>
            <person name="Kim J."/>
            <person name="Numa H."/>
            <person name="Itoh T."/>
            <person name="Buell C.R."/>
            <person name="Matsumoto T."/>
        </authorList>
    </citation>
    <scope>GENOME REANNOTATION</scope>
    <source>
        <strain>cv. Nipponbare</strain>
    </source>
</reference>
<reference key="5">
    <citation type="journal article" date="2005" name="PLoS Biol.">
        <title>The genomes of Oryza sativa: a history of duplications.</title>
        <authorList>
            <person name="Yu J."/>
            <person name="Wang J."/>
            <person name="Lin W."/>
            <person name="Li S."/>
            <person name="Li H."/>
            <person name="Zhou J."/>
            <person name="Ni P."/>
            <person name="Dong W."/>
            <person name="Hu S."/>
            <person name="Zeng C."/>
            <person name="Zhang J."/>
            <person name="Zhang Y."/>
            <person name="Li R."/>
            <person name="Xu Z."/>
            <person name="Li S."/>
            <person name="Li X."/>
            <person name="Zheng H."/>
            <person name="Cong L."/>
            <person name="Lin L."/>
            <person name="Yin J."/>
            <person name="Geng J."/>
            <person name="Li G."/>
            <person name="Shi J."/>
            <person name="Liu J."/>
            <person name="Lv H."/>
            <person name="Li J."/>
            <person name="Wang J."/>
            <person name="Deng Y."/>
            <person name="Ran L."/>
            <person name="Shi X."/>
            <person name="Wang X."/>
            <person name="Wu Q."/>
            <person name="Li C."/>
            <person name="Ren X."/>
            <person name="Wang J."/>
            <person name="Wang X."/>
            <person name="Li D."/>
            <person name="Liu D."/>
            <person name="Zhang X."/>
            <person name="Ji Z."/>
            <person name="Zhao W."/>
            <person name="Sun Y."/>
            <person name="Zhang Z."/>
            <person name="Bao J."/>
            <person name="Han Y."/>
            <person name="Dong L."/>
            <person name="Ji J."/>
            <person name="Chen P."/>
            <person name="Wu S."/>
            <person name="Liu J."/>
            <person name="Xiao Y."/>
            <person name="Bu D."/>
            <person name="Tan J."/>
            <person name="Yang L."/>
            <person name="Ye C."/>
            <person name="Zhang J."/>
            <person name="Xu J."/>
            <person name="Zhou Y."/>
            <person name="Yu Y."/>
            <person name="Zhang B."/>
            <person name="Zhuang S."/>
            <person name="Wei H."/>
            <person name="Liu B."/>
            <person name="Lei M."/>
            <person name="Yu H."/>
            <person name="Li Y."/>
            <person name="Xu H."/>
            <person name="Wei S."/>
            <person name="He X."/>
            <person name="Fang L."/>
            <person name="Zhang Z."/>
            <person name="Zhang Y."/>
            <person name="Huang X."/>
            <person name="Su Z."/>
            <person name="Tong W."/>
            <person name="Li J."/>
            <person name="Tong Z."/>
            <person name="Li S."/>
            <person name="Ye J."/>
            <person name="Wang L."/>
            <person name="Fang L."/>
            <person name="Lei T."/>
            <person name="Chen C.-S."/>
            <person name="Chen H.-C."/>
            <person name="Xu Z."/>
            <person name="Li H."/>
            <person name="Huang H."/>
            <person name="Zhang F."/>
            <person name="Xu H."/>
            <person name="Li N."/>
            <person name="Zhao C."/>
            <person name="Li S."/>
            <person name="Dong L."/>
            <person name="Huang Y."/>
            <person name="Li L."/>
            <person name="Xi Y."/>
            <person name="Qi Q."/>
            <person name="Li W."/>
            <person name="Zhang B."/>
            <person name="Hu W."/>
            <person name="Zhang Y."/>
            <person name="Tian X."/>
            <person name="Jiao Y."/>
            <person name="Liang X."/>
            <person name="Jin J."/>
            <person name="Gao L."/>
            <person name="Zheng W."/>
            <person name="Hao B."/>
            <person name="Liu S.-M."/>
            <person name="Wang W."/>
            <person name="Yuan L."/>
            <person name="Cao M."/>
            <person name="McDermott J."/>
            <person name="Samudrala R."/>
            <person name="Wang J."/>
            <person name="Wong G.K.-S."/>
            <person name="Yang H."/>
        </authorList>
    </citation>
    <scope>NUCLEOTIDE SEQUENCE [LARGE SCALE GENOMIC DNA]</scope>
    <source>
        <strain>cv. Nipponbare</strain>
    </source>
</reference>
<reference key="6">
    <citation type="journal article" date="2003" name="Science">
        <title>Collection, mapping, and annotation of over 28,000 cDNA clones from japonica rice.</title>
        <authorList>
            <consortium name="The rice full-length cDNA consortium"/>
        </authorList>
    </citation>
    <scope>NUCLEOTIDE SEQUENCE [LARGE SCALE MRNA]</scope>
    <source>
        <strain>cv. Nipponbare</strain>
    </source>
</reference>
<sequence>MPPVDPHSYTDGDHPVTAKAALAFYLDFAASTIHASALLTLSAPHSGDLLLDTRALAVHSASTASGPPSPIPFSLADAADPVLGSALTLTLPPDTTSFLLTFSTSPSASALQWLSPPQTASSLPFVFSQCQSIHARSVFPCHDTPAARITFDLLLNVPTQLSAVAAARHVSRRDPLPSDHRGACDDALWCAPGRIVEEFQMEQSVPPYLFAFAAGGIGFRDLGPRTRVYAEGGDKVLDEAAREFAGVEEMVKVGESLFGPYEWERFDLLVLPPSFPYGGMENPRMVFLTPTVIKGDAAGAQVVAHELAHSWTGNLITNKTNEDFWLNEGFTTYAERRIVEVVQGEERAALNMGIGWRGLNRMMERFKDNMEYTKLKPKMAGIDPDDVYSEVPYEKGFQFLWRIERQIGRPAFDEFLKNYISTFKFKSIDTETFLEFLKTNVPGIENQIDLQLWIEGTGIPPDAMEPESAIYKKICSLAAEFKSGKLPSEDEVADWSGQEWELYLENLPTDVEASQVTALDERYKLSESCDYEVKVAFLQLAIPTGCRCYFNEVEKCLKQVGRMKYLRPLYSSLARCSGEEKMLAHRIFSEAHEFYHPIARSVAESILSKHG</sequence>
<protein>
    <recommendedName>
        <fullName>Leucine aminopeptidase</fullName>
        <ecNumber>3.4.11.-</ecNumber>
    </recommendedName>
    <alternativeName>
        <fullName>Epoxide hydrolase</fullName>
        <ecNumber>3.3.2.10</ecNumber>
    </alternativeName>
    <alternativeName>
        <fullName>Leukotriene A-4 hydrolase homolog</fullName>
        <shortName>LTA-4 hydrolase</shortName>
    </alternativeName>
</protein>
<accession>Q84TA3</accession>
<accession>A0A0N7KIA5</accession>
<name>LKHA4_ORYSJ</name>
<feature type="chain" id="PRO_0000424589" description="Leucine aminopeptidase">
    <location>
        <begin position="1"/>
        <end position="611"/>
    </location>
</feature>
<feature type="active site" description="Proton acceptor" evidence="3">
    <location>
        <position position="306"/>
    </location>
</feature>
<feature type="active site" description="Proton donor" evidence="3">
    <location>
        <position position="393"/>
    </location>
</feature>
<feature type="binding site" evidence="1">
    <location>
        <begin position="129"/>
        <end position="131"/>
    </location>
    <ligand>
        <name>substrate</name>
    </ligand>
</feature>
<feature type="binding site" evidence="1">
    <location>
        <begin position="278"/>
        <end position="282"/>
    </location>
    <ligand>
        <name>substrate</name>
    </ligand>
</feature>
<feature type="binding site" evidence="3">
    <location>
        <position position="305"/>
    </location>
    <ligand>
        <name>Zn(2+)</name>
        <dbReference type="ChEBI" id="CHEBI:29105"/>
        <note>catalytic</note>
    </ligand>
</feature>
<feature type="binding site" evidence="3">
    <location>
        <position position="309"/>
    </location>
    <ligand>
        <name>Zn(2+)</name>
        <dbReference type="ChEBI" id="CHEBI:29105"/>
        <note>catalytic</note>
    </ligand>
</feature>
<feature type="binding site" evidence="3">
    <location>
        <position position="328"/>
    </location>
    <ligand>
        <name>Zn(2+)</name>
        <dbReference type="ChEBI" id="CHEBI:29105"/>
        <note>catalytic</note>
    </ligand>
</feature>
<feature type="binding site" evidence="1">
    <location>
        <begin position="562"/>
        <end position="564"/>
    </location>
    <ligand>
        <name>substrate</name>
    </ligand>
</feature>
<feature type="sequence conflict" description="In Ref. 6; AK073744." evidence="4" ref="6">
    <original>A</original>
    <variation>P</variation>
    <location>
        <position position="30"/>
    </location>
</feature>
<dbReference type="EC" id="3.4.11.-"/>
<dbReference type="EC" id="3.3.2.10"/>
<dbReference type="EMBL" id="AC104433">
    <property type="protein sequence ID" value="AAO65874.1"/>
    <property type="molecule type" value="Genomic_DNA"/>
</dbReference>
<dbReference type="EMBL" id="DP000009">
    <property type="protein sequence ID" value="ABF99571.1"/>
    <property type="molecule type" value="Genomic_DNA"/>
</dbReference>
<dbReference type="EMBL" id="AP008209">
    <property type="protein sequence ID" value="BAF13624.1"/>
    <property type="molecule type" value="Genomic_DNA"/>
</dbReference>
<dbReference type="EMBL" id="AP014959">
    <property type="protein sequence ID" value="BAS87073.1"/>
    <property type="molecule type" value="Genomic_DNA"/>
</dbReference>
<dbReference type="EMBL" id="CM000140">
    <property type="protein sequence ID" value="EAZ29074.1"/>
    <property type="molecule type" value="Genomic_DNA"/>
</dbReference>
<dbReference type="EMBL" id="AK073744">
    <property type="status" value="NOT_ANNOTATED_CDS"/>
    <property type="molecule type" value="mRNA"/>
</dbReference>
<dbReference type="RefSeq" id="XP_015632326.1">
    <property type="nucleotide sequence ID" value="XM_015776840.1"/>
</dbReference>
<dbReference type="SMR" id="Q84TA3"/>
<dbReference type="BioGRID" id="803620">
    <property type="interactions" value="1"/>
</dbReference>
<dbReference type="FunCoup" id="Q84TA3">
    <property type="interactions" value="3223"/>
</dbReference>
<dbReference type="STRING" id="39947.Q84TA3"/>
<dbReference type="MEROPS" id="M01.A26"/>
<dbReference type="iPTMnet" id="Q84TA3"/>
<dbReference type="PaxDb" id="39947-Q84TA3"/>
<dbReference type="EnsemblPlants" id="Os03t0819100-01">
    <property type="protein sequence ID" value="Os03t0819100-01"/>
    <property type="gene ID" value="Os03g0819100"/>
</dbReference>
<dbReference type="Gramene" id="Os03t0819100-01">
    <property type="protein sequence ID" value="Os03t0819100-01"/>
    <property type="gene ID" value="Os03g0819100"/>
</dbReference>
<dbReference type="KEGG" id="dosa:Os03g0819100"/>
<dbReference type="eggNOG" id="KOG1047">
    <property type="taxonomic scope" value="Eukaryota"/>
</dbReference>
<dbReference type="HOGENOM" id="CLU_014505_1_2_1"/>
<dbReference type="InParanoid" id="Q84TA3"/>
<dbReference type="OMA" id="CTALQWM"/>
<dbReference type="OrthoDB" id="79562at2759"/>
<dbReference type="Proteomes" id="UP000000763">
    <property type="component" value="Chromosome 3"/>
</dbReference>
<dbReference type="Proteomes" id="UP000007752">
    <property type="component" value="Chromosome 3"/>
</dbReference>
<dbReference type="Proteomes" id="UP000059680">
    <property type="component" value="Chromosome 3"/>
</dbReference>
<dbReference type="GO" id="GO:0005829">
    <property type="term" value="C:cytosol"/>
    <property type="evidence" value="ECO:0000318"/>
    <property type="project" value="GO_Central"/>
</dbReference>
<dbReference type="GO" id="GO:0004301">
    <property type="term" value="F:epoxide hydrolase activity"/>
    <property type="evidence" value="ECO:0007669"/>
    <property type="project" value="UniProtKB-EC"/>
</dbReference>
<dbReference type="GO" id="GO:0008237">
    <property type="term" value="F:metallopeptidase activity"/>
    <property type="evidence" value="ECO:0007669"/>
    <property type="project" value="UniProtKB-KW"/>
</dbReference>
<dbReference type="GO" id="GO:0008270">
    <property type="term" value="F:zinc ion binding"/>
    <property type="evidence" value="ECO:0007669"/>
    <property type="project" value="InterPro"/>
</dbReference>
<dbReference type="GO" id="GO:0019370">
    <property type="term" value="P:leukotriene biosynthetic process"/>
    <property type="evidence" value="ECO:0007669"/>
    <property type="project" value="UniProtKB-KW"/>
</dbReference>
<dbReference type="GO" id="GO:0006508">
    <property type="term" value="P:proteolysis"/>
    <property type="evidence" value="ECO:0007669"/>
    <property type="project" value="UniProtKB-KW"/>
</dbReference>
<dbReference type="CDD" id="cd09599">
    <property type="entry name" value="M1_LTA4H"/>
    <property type="match status" value="1"/>
</dbReference>
<dbReference type="FunFam" id="1.10.390.10:FF:000003">
    <property type="entry name" value="Leukotriene A(4) hydrolase"/>
    <property type="match status" value="1"/>
</dbReference>
<dbReference type="FunFam" id="3.30.2010.30:FF:000001">
    <property type="entry name" value="Leukotriene A(4) hydrolase"/>
    <property type="match status" value="1"/>
</dbReference>
<dbReference type="Gene3D" id="3.30.2010.30">
    <property type="match status" value="1"/>
</dbReference>
<dbReference type="Gene3D" id="1.10.390.10">
    <property type="entry name" value="Neutral Protease Domain 2"/>
    <property type="match status" value="1"/>
</dbReference>
<dbReference type="Gene3D" id="1.25.40.320">
    <property type="entry name" value="Peptidase M1, leukotriene A4 hydrolase/aminopeptidase C-terminal domain"/>
    <property type="match status" value="1"/>
</dbReference>
<dbReference type="Gene3D" id="2.60.40.1730">
    <property type="entry name" value="tricorn interacting facor f3 domain"/>
    <property type="match status" value="1"/>
</dbReference>
<dbReference type="InterPro" id="IPR045357">
    <property type="entry name" value="Aminopeptidase_N-like_N"/>
</dbReference>
<dbReference type="InterPro" id="IPR042097">
    <property type="entry name" value="Aminopeptidase_N-like_N_sf"/>
</dbReference>
<dbReference type="InterPro" id="IPR016024">
    <property type="entry name" value="ARM-type_fold"/>
</dbReference>
<dbReference type="InterPro" id="IPR049980">
    <property type="entry name" value="LTA4H_cat"/>
</dbReference>
<dbReference type="InterPro" id="IPR038502">
    <property type="entry name" value="M1_LTA-4_hydro/amino_C_sf"/>
</dbReference>
<dbReference type="InterPro" id="IPR034015">
    <property type="entry name" value="M1_LTA4H"/>
</dbReference>
<dbReference type="InterPro" id="IPR001930">
    <property type="entry name" value="Peptidase_M1"/>
</dbReference>
<dbReference type="InterPro" id="IPR015211">
    <property type="entry name" value="Peptidase_M1_C"/>
</dbReference>
<dbReference type="InterPro" id="IPR014782">
    <property type="entry name" value="Peptidase_M1_dom"/>
</dbReference>
<dbReference type="InterPro" id="IPR027268">
    <property type="entry name" value="Peptidase_M4/M1_CTD_sf"/>
</dbReference>
<dbReference type="PANTHER" id="PTHR45726">
    <property type="entry name" value="LEUKOTRIENE A-4 HYDROLASE"/>
    <property type="match status" value="1"/>
</dbReference>
<dbReference type="PANTHER" id="PTHR45726:SF3">
    <property type="entry name" value="LEUKOTRIENE A-4 HYDROLASE"/>
    <property type="match status" value="1"/>
</dbReference>
<dbReference type="Pfam" id="PF09127">
    <property type="entry name" value="Leuk-A4-hydro_C"/>
    <property type="match status" value="1"/>
</dbReference>
<dbReference type="Pfam" id="PF01433">
    <property type="entry name" value="Peptidase_M1"/>
    <property type="match status" value="1"/>
</dbReference>
<dbReference type="Pfam" id="PF17900">
    <property type="entry name" value="Peptidase_M1_N"/>
    <property type="match status" value="1"/>
</dbReference>
<dbReference type="PRINTS" id="PR00756">
    <property type="entry name" value="ALADIPTASE"/>
</dbReference>
<dbReference type="SMART" id="SM01263">
    <property type="entry name" value="Leuk-A4-hydro_C"/>
    <property type="match status" value="1"/>
</dbReference>
<dbReference type="SUPFAM" id="SSF48371">
    <property type="entry name" value="ARM repeat"/>
    <property type="match status" value="1"/>
</dbReference>
<dbReference type="SUPFAM" id="SSF63737">
    <property type="entry name" value="Leukotriene A4 hydrolase N-terminal domain"/>
    <property type="match status" value="1"/>
</dbReference>
<dbReference type="SUPFAM" id="SSF55486">
    <property type="entry name" value="Metalloproteases ('zincins'), catalytic domain"/>
    <property type="match status" value="1"/>
</dbReference>
<dbReference type="PROSITE" id="PS00142">
    <property type="entry name" value="ZINC_PROTEASE"/>
    <property type="match status" value="1"/>
</dbReference>
<gene>
    <name type="primary">LKHA4</name>
    <name type="ordered locus">Os03g0819100</name>
    <name type="ordered locus">LOC_Os03g60460</name>
    <name type="ORF">OJ1754_E06.9</name>
    <name type="ORF">OsJ_13129</name>
</gene>
<evidence type="ECO:0000250" key="1"/>
<evidence type="ECO:0000250" key="2">
    <source>
        <dbReference type="UniProtKB" id="Q10740"/>
    </source>
</evidence>
<evidence type="ECO:0000255" key="3">
    <source>
        <dbReference type="PROSITE-ProRule" id="PRU10095"/>
    </source>
</evidence>
<evidence type="ECO:0000305" key="4"/>
<organism>
    <name type="scientific">Oryza sativa subsp. japonica</name>
    <name type="common">Rice</name>
    <dbReference type="NCBI Taxonomy" id="39947"/>
    <lineage>
        <taxon>Eukaryota</taxon>
        <taxon>Viridiplantae</taxon>
        <taxon>Streptophyta</taxon>
        <taxon>Embryophyta</taxon>
        <taxon>Tracheophyta</taxon>
        <taxon>Spermatophyta</taxon>
        <taxon>Magnoliopsida</taxon>
        <taxon>Liliopsida</taxon>
        <taxon>Poales</taxon>
        <taxon>Poaceae</taxon>
        <taxon>BOP clade</taxon>
        <taxon>Oryzoideae</taxon>
        <taxon>Oryzeae</taxon>
        <taxon>Oryzinae</taxon>
        <taxon>Oryza</taxon>
        <taxon>Oryza sativa</taxon>
    </lineage>
</organism>
<comment type="function">
    <text evidence="2">Aminopeptidase that preferentially cleaves di- and tripeptides. Also has low epoxide hydrolase activity (in vitro). Can hydrolyze the epoxide leukotriene LTA(4) but it forms preferentially 5,6-dihydroxy-7,9,11,14-eicosatetraenoic acid rather than the cytokine leukotriene B(4) as the product compared to the homologous mammalian enzyme (in vitro).</text>
</comment>
<comment type="catalytic activity">
    <reaction evidence="2">
        <text>an epoxide + H2O = an ethanediol</text>
        <dbReference type="Rhea" id="RHEA:19037"/>
        <dbReference type="ChEBI" id="CHEBI:15377"/>
        <dbReference type="ChEBI" id="CHEBI:32955"/>
        <dbReference type="ChEBI" id="CHEBI:140594"/>
        <dbReference type="EC" id="3.3.2.10"/>
    </reaction>
</comment>
<comment type="cofactor">
    <cofactor evidence="2">
        <name>Zn(2+)</name>
        <dbReference type="ChEBI" id="CHEBI:29105"/>
    </cofactor>
    <text evidence="2">Binds 1 zinc ion per subunit.</text>
</comment>
<comment type="subcellular location">
    <subcellularLocation>
        <location evidence="1">Cytoplasm</location>
    </subcellularLocation>
</comment>
<comment type="similarity">
    <text evidence="4">Belongs to the peptidase M1 family.</text>
</comment>
<proteinExistence type="evidence at transcript level"/>
<keyword id="KW-0963">Cytoplasm</keyword>
<keyword id="KW-0378">Hydrolase</keyword>
<keyword id="KW-0434">Leukotriene biosynthesis</keyword>
<keyword id="KW-0479">Metal-binding</keyword>
<keyword id="KW-0482">Metalloprotease</keyword>
<keyword id="KW-0645">Protease</keyword>
<keyword id="KW-1185">Reference proteome</keyword>
<keyword id="KW-0862">Zinc</keyword>